<protein>
    <recommendedName>
        <fullName>Response regulator MprA</fullName>
    </recommendedName>
    <alternativeName>
        <fullName>Mycobacterial persistence regulator A</fullName>
    </alternativeName>
</protein>
<reference key="1">
    <citation type="submission" date="2007-02" db="EMBL/GenBank/DDBJ databases">
        <title>Complete sequence of Mycobacterium sp. JLS.</title>
        <authorList>
            <consortium name="US DOE Joint Genome Institute"/>
            <person name="Copeland A."/>
            <person name="Lucas S."/>
            <person name="Lapidus A."/>
            <person name="Barry K."/>
            <person name="Detter J.C."/>
            <person name="Glavina del Rio T."/>
            <person name="Hammon N."/>
            <person name="Israni S."/>
            <person name="Dalin E."/>
            <person name="Tice H."/>
            <person name="Pitluck S."/>
            <person name="Chain P."/>
            <person name="Malfatti S."/>
            <person name="Shin M."/>
            <person name="Vergez L."/>
            <person name="Schmutz J."/>
            <person name="Larimer F."/>
            <person name="Land M."/>
            <person name="Hauser L."/>
            <person name="Kyrpides N."/>
            <person name="Mikhailova N."/>
            <person name="Miller C.D."/>
            <person name="Anderson A.J."/>
            <person name="Sims R.C."/>
            <person name="Richardson P."/>
        </authorList>
    </citation>
    <scope>NUCLEOTIDE SEQUENCE [LARGE SCALE GENOMIC DNA]</scope>
    <source>
        <strain>JLS</strain>
    </source>
</reference>
<proteinExistence type="inferred from homology"/>
<comment type="function">
    <text evidence="1">Member of the two-component regulatory system MprB/MprA which contributes to maintaining a balance among several systems involved in stress resistance and is required for establishment and maintenance of persistent infection in the host. Functions as a transcriptional regulator that recognizes a 19-bp nucleotide motif comprizing two loosely conserved 8-bp direct DNA-binding motif repeats separated by a 3-bp spacer region (By similarity).</text>
</comment>
<comment type="subcellular location">
    <subcellularLocation>
        <location evidence="4">Cytoplasm</location>
    </subcellularLocation>
</comment>
<comment type="PTM">
    <text evidence="1">Phosphorylated and dephosphorylated by MprB.</text>
</comment>
<feature type="chain" id="PRO_0000308424" description="Response regulator MprA">
    <location>
        <begin position="1"/>
        <end position="230"/>
    </location>
</feature>
<feature type="domain" description="Response regulatory" evidence="2">
    <location>
        <begin position="4"/>
        <end position="118"/>
    </location>
</feature>
<feature type="DNA-binding region" description="OmpR/PhoB-type" evidence="3">
    <location>
        <begin position="129"/>
        <end position="227"/>
    </location>
</feature>
<feature type="modified residue" description="4-aspartylphosphate" evidence="2">
    <location>
        <position position="48"/>
    </location>
</feature>
<dbReference type="EMBL" id="CP000580">
    <property type="protein sequence ID" value="ABO00447.1"/>
    <property type="molecule type" value="Genomic_DNA"/>
</dbReference>
<dbReference type="SMR" id="A3Q5L9"/>
<dbReference type="KEGG" id="mjl:Mjls_4681"/>
<dbReference type="HOGENOM" id="CLU_000445_30_1_11"/>
<dbReference type="BioCyc" id="MSP164757:G1G8C-4724-MONOMER"/>
<dbReference type="GO" id="GO:0005829">
    <property type="term" value="C:cytosol"/>
    <property type="evidence" value="ECO:0007669"/>
    <property type="project" value="TreeGrafter"/>
</dbReference>
<dbReference type="GO" id="GO:0032993">
    <property type="term" value="C:protein-DNA complex"/>
    <property type="evidence" value="ECO:0007669"/>
    <property type="project" value="TreeGrafter"/>
</dbReference>
<dbReference type="GO" id="GO:0000156">
    <property type="term" value="F:phosphorelay response regulator activity"/>
    <property type="evidence" value="ECO:0007669"/>
    <property type="project" value="TreeGrafter"/>
</dbReference>
<dbReference type="GO" id="GO:0000976">
    <property type="term" value="F:transcription cis-regulatory region binding"/>
    <property type="evidence" value="ECO:0007669"/>
    <property type="project" value="TreeGrafter"/>
</dbReference>
<dbReference type="GO" id="GO:0006355">
    <property type="term" value="P:regulation of DNA-templated transcription"/>
    <property type="evidence" value="ECO:0007669"/>
    <property type="project" value="InterPro"/>
</dbReference>
<dbReference type="CDD" id="cd17627">
    <property type="entry name" value="REC_OmpR_PrrA-like"/>
    <property type="match status" value="1"/>
</dbReference>
<dbReference type="CDD" id="cd00383">
    <property type="entry name" value="trans_reg_C"/>
    <property type="match status" value="1"/>
</dbReference>
<dbReference type="FunFam" id="3.40.50.2300:FF:000001">
    <property type="entry name" value="DNA-binding response regulator PhoB"/>
    <property type="match status" value="1"/>
</dbReference>
<dbReference type="FunFam" id="1.10.10.10:FF:000005">
    <property type="entry name" value="Two-component system response regulator"/>
    <property type="match status" value="1"/>
</dbReference>
<dbReference type="Gene3D" id="3.40.50.2300">
    <property type="match status" value="1"/>
</dbReference>
<dbReference type="Gene3D" id="6.10.250.690">
    <property type="match status" value="1"/>
</dbReference>
<dbReference type="Gene3D" id="1.10.10.10">
    <property type="entry name" value="Winged helix-like DNA-binding domain superfamily/Winged helix DNA-binding domain"/>
    <property type="match status" value="1"/>
</dbReference>
<dbReference type="InterPro" id="IPR011006">
    <property type="entry name" value="CheY-like_superfamily"/>
</dbReference>
<dbReference type="InterPro" id="IPR001867">
    <property type="entry name" value="OmpR/PhoB-type_DNA-bd"/>
</dbReference>
<dbReference type="InterPro" id="IPR016032">
    <property type="entry name" value="Sig_transdc_resp-reg_C-effctor"/>
</dbReference>
<dbReference type="InterPro" id="IPR001789">
    <property type="entry name" value="Sig_transdc_resp-reg_receiver"/>
</dbReference>
<dbReference type="InterPro" id="IPR039420">
    <property type="entry name" value="WalR-like"/>
</dbReference>
<dbReference type="InterPro" id="IPR036388">
    <property type="entry name" value="WH-like_DNA-bd_sf"/>
</dbReference>
<dbReference type="PANTHER" id="PTHR48111">
    <property type="entry name" value="REGULATOR OF RPOS"/>
    <property type="match status" value="1"/>
</dbReference>
<dbReference type="PANTHER" id="PTHR48111:SF22">
    <property type="entry name" value="REGULATOR OF RPOS"/>
    <property type="match status" value="1"/>
</dbReference>
<dbReference type="Pfam" id="PF00072">
    <property type="entry name" value="Response_reg"/>
    <property type="match status" value="1"/>
</dbReference>
<dbReference type="Pfam" id="PF00486">
    <property type="entry name" value="Trans_reg_C"/>
    <property type="match status" value="1"/>
</dbReference>
<dbReference type="SMART" id="SM00448">
    <property type="entry name" value="REC"/>
    <property type="match status" value="1"/>
</dbReference>
<dbReference type="SMART" id="SM00862">
    <property type="entry name" value="Trans_reg_C"/>
    <property type="match status" value="1"/>
</dbReference>
<dbReference type="SUPFAM" id="SSF46894">
    <property type="entry name" value="C-terminal effector domain of the bipartite response regulators"/>
    <property type="match status" value="1"/>
</dbReference>
<dbReference type="SUPFAM" id="SSF52172">
    <property type="entry name" value="CheY-like"/>
    <property type="match status" value="1"/>
</dbReference>
<dbReference type="PROSITE" id="PS51755">
    <property type="entry name" value="OMPR_PHOB"/>
    <property type="match status" value="1"/>
</dbReference>
<dbReference type="PROSITE" id="PS50110">
    <property type="entry name" value="RESPONSE_REGULATORY"/>
    <property type="match status" value="1"/>
</dbReference>
<accession>A3Q5L9</accession>
<sequence>MPVRILVVDDDRAVRESLRRSLSFNGYSVELAQDGVEALDLIANNRPDAVVLDVMMPRLDGLEVCRQLRSTGDDLPILVLTARDSVSERVAGLDAGADDYLPKPFALEELLARMRALLRRTSPDEGPDSPALTFLDLTLDPVTREVTRGSRQISLTRTEFALLEMLIANPRRVLTRSRILEEVWGFDFPTSGNALEVYIGYLRRKTEASGEPRLIHTVRGVGYVLRETPP</sequence>
<gene>
    <name type="primary">mprA</name>
    <name type="ordered locus">Mjls_4681</name>
</gene>
<name>MPRA_MYCSJ</name>
<evidence type="ECO:0000250" key="1"/>
<evidence type="ECO:0000255" key="2">
    <source>
        <dbReference type="PROSITE-ProRule" id="PRU00169"/>
    </source>
</evidence>
<evidence type="ECO:0000255" key="3">
    <source>
        <dbReference type="PROSITE-ProRule" id="PRU01091"/>
    </source>
</evidence>
<evidence type="ECO:0000305" key="4"/>
<organism>
    <name type="scientific">Mycobacterium sp. (strain JLS)</name>
    <dbReference type="NCBI Taxonomy" id="164757"/>
    <lineage>
        <taxon>Bacteria</taxon>
        <taxon>Bacillati</taxon>
        <taxon>Actinomycetota</taxon>
        <taxon>Actinomycetes</taxon>
        <taxon>Mycobacteriales</taxon>
        <taxon>Mycobacteriaceae</taxon>
        <taxon>Mycobacterium</taxon>
    </lineage>
</organism>
<keyword id="KW-0963">Cytoplasm</keyword>
<keyword id="KW-0238">DNA-binding</keyword>
<keyword id="KW-0597">Phosphoprotein</keyword>
<keyword id="KW-0346">Stress response</keyword>
<keyword id="KW-0804">Transcription</keyword>
<keyword id="KW-0805">Transcription regulation</keyword>
<keyword id="KW-0902">Two-component regulatory system</keyword>
<keyword id="KW-0843">Virulence</keyword>